<sequence length="530" mass="55712">MYLVTAAEMGQLDRLASSEYMIPSIVLMENAGLRVVESIERHFQGQVANRRILIFCGKGNNGGDGLVVARHLLNRGAEVKVFLLARPEDIRGDARTNLEIYQKMGGKLLLLLGESHLQRADIALLYADLVVDAIFGTGFKGAAMGLPAAVINMINKAHRETVAVDLPSGLEADTGRCFGPCIQATWTVTFALPKLGLVVEPGASLTGRLEVADIGIPQKLVATQHFNRRLLTAAWCRSQLPRREASGHKGLYGRVLAVGGSPGLTGAITLAATAALKAGAGLVTAAVPRGVQGILAMKTTEIMTMSLPETPAGALSRDALDPLLERLAEVDVLAIGPGLSRDPATVDLVKELLPRVQVPAVVDADALNALATDTRVLTGDHGPLVLTPHPGEMARLLGTTAAKIQEDRLEIAAKYAREWQAVLLLKGARTVIAWPDGQVYINPTGNPGMATAGSGDVLTGIIAGLAGQGLKPGVAAALGAYLHGAAGDEAARQRGQRAMMAGDLLDFLPYVLRNLEEEVETIVAAGLGRD</sequence>
<organism>
    <name type="scientific">Moorella thermoacetica (strain ATCC 39073 / JCM 9320)</name>
    <dbReference type="NCBI Taxonomy" id="264732"/>
    <lineage>
        <taxon>Bacteria</taxon>
        <taxon>Bacillati</taxon>
        <taxon>Bacillota</taxon>
        <taxon>Clostridia</taxon>
        <taxon>Moorellales</taxon>
        <taxon>Moorellaceae</taxon>
        <taxon>Moorella</taxon>
    </lineage>
</organism>
<protein>
    <recommendedName>
        <fullName>Bifunctional NAD(P)H-hydrate repair enzyme Nnr</fullName>
    </recommendedName>
    <alternativeName>
        <fullName>Nicotinamide nucleotide repair protein</fullName>
    </alternativeName>
    <domain>
        <recommendedName>
            <fullName>ADP-dependent (S)-NAD(P)H-hydrate dehydratase</fullName>
            <ecNumber>4.2.1.136</ecNumber>
        </recommendedName>
        <alternativeName>
            <fullName>ADP-dependent NAD(P)HX dehydratase</fullName>
        </alternativeName>
    </domain>
    <domain>
        <recommendedName>
            <fullName>NAD(P)H-hydrate epimerase</fullName>
            <ecNumber>5.1.99.6</ecNumber>
        </recommendedName>
        <alternativeName>
            <fullName>NAD(P)HX epimerase</fullName>
        </alternativeName>
    </domain>
</protein>
<evidence type="ECO:0000250" key="1"/>
<evidence type="ECO:0000305" key="2"/>
<dbReference type="EC" id="4.2.1.136"/>
<dbReference type="EC" id="5.1.99.6"/>
<dbReference type="EMBL" id="CP000232">
    <property type="protein sequence ID" value="ABC20457.1"/>
    <property type="molecule type" value="Genomic_DNA"/>
</dbReference>
<dbReference type="RefSeq" id="YP_431000.1">
    <property type="nucleotide sequence ID" value="NC_007644.1"/>
</dbReference>
<dbReference type="SMR" id="Q2RGI2"/>
<dbReference type="STRING" id="264732.Moth_2168"/>
<dbReference type="EnsemblBacteria" id="ABC20457">
    <property type="protein sequence ID" value="ABC20457"/>
    <property type="gene ID" value="Moth_2168"/>
</dbReference>
<dbReference type="KEGG" id="mta:Moth_2168"/>
<dbReference type="PATRIC" id="fig|264732.11.peg.2362"/>
<dbReference type="eggNOG" id="COG0062">
    <property type="taxonomic scope" value="Bacteria"/>
</dbReference>
<dbReference type="eggNOG" id="COG0063">
    <property type="taxonomic scope" value="Bacteria"/>
</dbReference>
<dbReference type="HOGENOM" id="CLU_024853_4_1_9"/>
<dbReference type="OrthoDB" id="9806925at2"/>
<dbReference type="GO" id="GO:0052855">
    <property type="term" value="F:ADP-dependent NAD(P)H-hydrate dehydratase activity"/>
    <property type="evidence" value="ECO:0007669"/>
    <property type="project" value="UniProtKB-UniRule"/>
</dbReference>
<dbReference type="GO" id="GO:0005524">
    <property type="term" value="F:ATP binding"/>
    <property type="evidence" value="ECO:0007669"/>
    <property type="project" value="UniProtKB-KW"/>
</dbReference>
<dbReference type="GO" id="GO:0046872">
    <property type="term" value="F:metal ion binding"/>
    <property type="evidence" value="ECO:0007669"/>
    <property type="project" value="UniProtKB-KW"/>
</dbReference>
<dbReference type="GO" id="GO:0052856">
    <property type="term" value="F:NAD(P)HX epimerase activity"/>
    <property type="evidence" value="ECO:0007669"/>
    <property type="project" value="UniProtKB-UniRule"/>
</dbReference>
<dbReference type="GO" id="GO:0110051">
    <property type="term" value="P:metabolite repair"/>
    <property type="evidence" value="ECO:0007669"/>
    <property type="project" value="TreeGrafter"/>
</dbReference>
<dbReference type="GO" id="GO:0046496">
    <property type="term" value="P:nicotinamide nucleotide metabolic process"/>
    <property type="evidence" value="ECO:0007669"/>
    <property type="project" value="UniProtKB-UniRule"/>
</dbReference>
<dbReference type="CDD" id="cd01171">
    <property type="entry name" value="YXKO-related"/>
    <property type="match status" value="1"/>
</dbReference>
<dbReference type="Gene3D" id="3.40.1190.20">
    <property type="match status" value="1"/>
</dbReference>
<dbReference type="Gene3D" id="3.40.50.10260">
    <property type="entry name" value="YjeF N-terminal domain"/>
    <property type="match status" value="1"/>
</dbReference>
<dbReference type="HAMAP" id="MF_01965">
    <property type="entry name" value="NADHX_dehydratase"/>
    <property type="match status" value="1"/>
</dbReference>
<dbReference type="HAMAP" id="MF_01966">
    <property type="entry name" value="NADHX_epimerase"/>
    <property type="match status" value="1"/>
</dbReference>
<dbReference type="InterPro" id="IPR017953">
    <property type="entry name" value="Carbohydrate_kinase_pred_CS"/>
</dbReference>
<dbReference type="InterPro" id="IPR000631">
    <property type="entry name" value="CARKD"/>
</dbReference>
<dbReference type="InterPro" id="IPR030677">
    <property type="entry name" value="Nnr"/>
</dbReference>
<dbReference type="InterPro" id="IPR029056">
    <property type="entry name" value="Ribokinase-like"/>
</dbReference>
<dbReference type="InterPro" id="IPR004443">
    <property type="entry name" value="YjeF_N_dom"/>
</dbReference>
<dbReference type="InterPro" id="IPR036652">
    <property type="entry name" value="YjeF_N_dom_sf"/>
</dbReference>
<dbReference type="NCBIfam" id="TIGR00196">
    <property type="entry name" value="yjeF_cterm"/>
    <property type="match status" value="1"/>
</dbReference>
<dbReference type="NCBIfam" id="TIGR00197">
    <property type="entry name" value="yjeF_nterm"/>
    <property type="match status" value="1"/>
</dbReference>
<dbReference type="PANTHER" id="PTHR12592:SF0">
    <property type="entry name" value="ATP-DEPENDENT (S)-NAD(P)H-HYDRATE DEHYDRATASE"/>
    <property type="match status" value="1"/>
</dbReference>
<dbReference type="PANTHER" id="PTHR12592">
    <property type="entry name" value="ATP-DEPENDENT (S)-NAD(P)H-HYDRATE DEHYDRATASE FAMILY MEMBER"/>
    <property type="match status" value="1"/>
</dbReference>
<dbReference type="Pfam" id="PF01256">
    <property type="entry name" value="Carb_kinase"/>
    <property type="match status" value="1"/>
</dbReference>
<dbReference type="Pfam" id="PF03853">
    <property type="entry name" value="YjeF_N"/>
    <property type="match status" value="1"/>
</dbReference>
<dbReference type="PIRSF" id="PIRSF017184">
    <property type="entry name" value="Nnr"/>
    <property type="match status" value="1"/>
</dbReference>
<dbReference type="SUPFAM" id="SSF53613">
    <property type="entry name" value="Ribokinase-like"/>
    <property type="match status" value="1"/>
</dbReference>
<dbReference type="SUPFAM" id="SSF64153">
    <property type="entry name" value="YjeF N-terminal domain-like"/>
    <property type="match status" value="1"/>
</dbReference>
<dbReference type="PROSITE" id="PS01050">
    <property type="entry name" value="YJEF_C_2"/>
    <property type="match status" value="1"/>
</dbReference>
<dbReference type="PROSITE" id="PS51383">
    <property type="entry name" value="YJEF_C_3"/>
    <property type="match status" value="1"/>
</dbReference>
<dbReference type="PROSITE" id="PS51385">
    <property type="entry name" value="YJEF_N"/>
    <property type="match status" value="1"/>
</dbReference>
<name>NNR_MOOTA</name>
<gene>
    <name type="primary">nnr</name>
    <name type="ordered locus">Moth_2168</name>
</gene>
<proteinExistence type="inferred from homology"/>
<accession>Q2RGI2</accession>
<comment type="function">
    <text evidence="1">Bifunctional enzyme that catalyzes the epimerization of the S- and R-forms of NAD(P)HX and the dehydration of the S-form of NAD(P)HX at the expense of ADP, which is converted to AMP. This allows the repair of both epimers of NAD(P)HX, a damaged form of NAD(P)H that is a result of enzymatic or heat-dependent hydration (By similarity).</text>
</comment>
<comment type="catalytic activity">
    <reaction>
        <text>(6S)-NADHX + ADP = AMP + phosphate + NADH + H(+)</text>
        <dbReference type="Rhea" id="RHEA:32223"/>
        <dbReference type="ChEBI" id="CHEBI:15378"/>
        <dbReference type="ChEBI" id="CHEBI:43474"/>
        <dbReference type="ChEBI" id="CHEBI:57945"/>
        <dbReference type="ChEBI" id="CHEBI:64074"/>
        <dbReference type="ChEBI" id="CHEBI:456215"/>
        <dbReference type="ChEBI" id="CHEBI:456216"/>
        <dbReference type="EC" id="4.2.1.136"/>
    </reaction>
</comment>
<comment type="catalytic activity">
    <reaction>
        <text>(6S)-NADPHX + ADP = AMP + phosphate + NADPH + H(+)</text>
        <dbReference type="Rhea" id="RHEA:32235"/>
        <dbReference type="ChEBI" id="CHEBI:15378"/>
        <dbReference type="ChEBI" id="CHEBI:43474"/>
        <dbReference type="ChEBI" id="CHEBI:57783"/>
        <dbReference type="ChEBI" id="CHEBI:64076"/>
        <dbReference type="ChEBI" id="CHEBI:456215"/>
        <dbReference type="ChEBI" id="CHEBI:456216"/>
        <dbReference type="EC" id="4.2.1.136"/>
    </reaction>
</comment>
<comment type="catalytic activity">
    <reaction>
        <text>(6R)-NADHX = (6S)-NADHX</text>
        <dbReference type="Rhea" id="RHEA:32215"/>
        <dbReference type="ChEBI" id="CHEBI:64074"/>
        <dbReference type="ChEBI" id="CHEBI:64075"/>
        <dbReference type="EC" id="5.1.99.6"/>
    </reaction>
</comment>
<comment type="catalytic activity">
    <reaction>
        <text>(6R)-NADPHX = (6S)-NADPHX</text>
        <dbReference type="Rhea" id="RHEA:32227"/>
        <dbReference type="ChEBI" id="CHEBI:64076"/>
        <dbReference type="ChEBI" id="CHEBI:64077"/>
        <dbReference type="EC" id="5.1.99.6"/>
    </reaction>
</comment>
<comment type="cofactor">
    <cofactor evidence="1">
        <name>K(+)</name>
        <dbReference type="ChEBI" id="CHEBI:29103"/>
    </cofactor>
    <text evidence="1">Binds 1 potassium ion per subunit.</text>
</comment>
<comment type="similarity">
    <text evidence="2">In the N-terminal section; belongs to the NnrE/AIBP family.</text>
</comment>
<comment type="similarity">
    <text evidence="2">In the C-terminal section; belongs to the NnrD/CARKD family.</text>
</comment>
<reference key="1">
    <citation type="journal article" date="2008" name="Environ. Microbiol.">
        <title>The complete genome sequence of Moorella thermoacetica (f. Clostridium thermoaceticum).</title>
        <authorList>
            <person name="Pierce E."/>
            <person name="Xie G."/>
            <person name="Barabote R.D."/>
            <person name="Saunders E."/>
            <person name="Han C.S."/>
            <person name="Detter J.C."/>
            <person name="Richardson P."/>
            <person name="Brettin T.S."/>
            <person name="Das A."/>
            <person name="Ljungdahl L.G."/>
            <person name="Ragsdale S.W."/>
        </authorList>
    </citation>
    <scope>NUCLEOTIDE SEQUENCE [LARGE SCALE GENOMIC DNA]</scope>
    <source>
        <strain>ATCC 39073 / JCM 9320</strain>
    </source>
</reference>
<feature type="chain" id="PRO_0000416419" description="Bifunctional NAD(P)H-hydrate repair enzyme Nnr">
    <location>
        <begin position="1"/>
        <end position="530"/>
    </location>
</feature>
<feature type="domain" description="YjeF N-terminal">
    <location>
        <begin position="9"/>
        <end position="222"/>
    </location>
</feature>
<feature type="domain" description="YjeF C-terminal">
    <location>
        <begin position="232"/>
        <end position="515"/>
    </location>
</feature>
<feature type="region of interest" description="NAD(P)H-hydrate epimerase" evidence="1">
    <location>
        <begin position="1"/>
        <end position="224"/>
    </location>
</feature>
<feature type="region of interest" description="NADPHX 1; for epimerase activity" evidence="1">
    <location>
        <begin position="60"/>
        <end position="64"/>
    </location>
</feature>
<feature type="region of interest" description="NADPHX 1; for epimerase activity" evidence="1">
    <location>
        <begin position="136"/>
        <end position="142"/>
    </location>
</feature>
<feature type="region of interest" description="ADP-dependent (S)-NAD(P)H-hydrate dehydratase" evidence="1">
    <location>
        <begin position="232"/>
        <end position="530"/>
    </location>
</feature>
<feature type="region of interest" description="NADPHX 2; for dehydratase activity" evidence="1">
    <location>
        <begin position="389"/>
        <end position="395"/>
    </location>
</feature>
<feature type="binding site" evidence="1">
    <location>
        <position position="61"/>
    </location>
    <ligand>
        <name>K(+)</name>
        <dbReference type="ChEBI" id="CHEBI:29103"/>
    </ligand>
</feature>
<feature type="binding site" evidence="1">
    <location>
        <position position="132"/>
    </location>
    <ligand>
        <name>K(+)</name>
        <dbReference type="ChEBI" id="CHEBI:29103"/>
    </ligand>
</feature>
<feature type="binding site" evidence="1">
    <location>
        <position position="165"/>
    </location>
    <ligand>
        <name>(6S)-NADPHX</name>
        <dbReference type="ChEBI" id="CHEBI:64076"/>
        <label>1</label>
        <note>for epimerase activity</note>
    </ligand>
</feature>
<feature type="binding site" evidence="1">
    <location>
        <position position="168"/>
    </location>
    <ligand>
        <name>K(+)</name>
        <dbReference type="ChEBI" id="CHEBI:29103"/>
    </ligand>
</feature>
<feature type="binding site" evidence="1">
    <location>
        <position position="338"/>
    </location>
    <ligand>
        <name>(6S)-NADPHX</name>
        <dbReference type="ChEBI" id="CHEBI:64076"/>
        <label>2</label>
        <note>for dehydratase activity</note>
    </ligand>
</feature>
<feature type="binding site" evidence="1">
    <location>
        <begin position="426"/>
        <end position="430"/>
    </location>
    <ligand>
        <name>ADP</name>
        <dbReference type="ChEBI" id="CHEBI:456216"/>
    </ligand>
</feature>
<feature type="binding site" evidence="1">
    <location>
        <begin position="446"/>
        <end position="455"/>
    </location>
    <ligand>
        <name>ADP</name>
        <dbReference type="ChEBI" id="CHEBI:456216"/>
    </ligand>
</feature>
<feature type="binding site" evidence="1">
    <location>
        <position position="456"/>
    </location>
    <ligand>
        <name>(6S)-NADPHX</name>
        <dbReference type="ChEBI" id="CHEBI:64076"/>
        <label>2</label>
        <note>for dehydratase activity</note>
    </ligand>
</feature>
<keyword id="KW-0067">ATP-binding</keyword>
<keyword id="KW-0413">Isomerase</keyword>
<keyword id="KW-0456">Lyase</keyword>
<keyword id="KW-0479">Metal-binding</keyword>
<keyword id="KW-0511">Multifunctional enzyme</keyword>
<keyword id="KW-0520">NAD</keyword>
<keyword id="KW-0521">NADP</keyword>
<keyword id="KW-0547">Nucleotide-binding</keyword>
<keyword id="KW-0630">Potassium</keyword>